<organism>
    <name type="scientific">Escherichia coli O6:H1 (strain CFT073 / ATCC 700928 / UPEC)</name>
    <dbReference type="NCBI Taxonomy" id="199310"/>
    <lineage>
        <taxon>Bacteria</taxon>
        <taxon>Pseudomonadati</taxon>
        <taxon>Pseudomonadota</taxon>
        <taxon>Gammaproteobacteria</taxon>
        <taxon>Enterobacterales</taxon>
        <taxon>Enterobacteriaceae</taxon>
        <taxon>Escherichia</taxon>
    </lineage>
</organism>
<proteinExistence type="inferred from homology"/>
<protein>
    <recommendedName>
        <fullName>Putative acid--amine ligase YgiC</fullName>
        <ecNumber>6.3.1.-</ecNumber>
    </recommendedName>
</protein>
<sequence>MERVSITERPDWREKAHEYGFNFHTMYGEPYWCEDAYYKLTLAQVEKLEEVTAELHQMCLKVVEKVIASDELMTKFRIPKHTWSFVRQSWLTHQPSLYSRLDLAWDGTGEPKLLENNADTPTSLYEAAFFQWIWLEDQLNAGNLPEGSDQFNSLQEKLIDRFVELREQYGFQLLHLTCCRDTVEDRGTIQYLQDCATEAEIATEFLYIDDIGLGEKGQFTDLQDQVISNLFKLYPWEFMLREMFSTKLEDAGVRWLEPAWKSIISNKALLPLLWEMFPNHPNLLPAYFAEDDHPQMEKYVVKPIFSREGANVSIIENGKTIEAAEGPYGEEGMIVQQFHPLPKFGDSYMLIGSWLVNDQPAGIGIREDRALITQDMSRFYPHIFVE</sequence>
<name>YGIC_ECOL6</name>
<accession>P0ADT6</accession>
<accession>P24196</accession>
<keyword id="KW-0067">ATP-binding</keyword>
<keyword id="KW-0436">Ligase</keyword>
<keyword id="KW-0460">Magnesium</keyword>
<keyword id="KW-0479">Metal-binding</keyword>
<keyword id="KW-0547">Nucleotide-binding</keyword>
<keyword id="KW-1185">Reference proteome</keyword>
<evidence type="ECO:0000250" key="1"/>
<evidence type="ECO:0000305" key="2"/>
<comment type="function">
    <text evidence="1">May be a ligase forming an amide bond. Shows ATPase activity (By similarity).</text>
</comment>
<comment type="similarity">
    <text evidence="2">Belongs to the glutathionylspermidine synthase preATP-grasp family.</text>
</comment>
<reference key="1">
    <citation type="journal article" date="2002" name="Proc. Natl. Acad. Sci. U.S.A.">
        <title>Extensive mosaic structure revealed by the complete genome sequence of uropathogenic Escherichia coli.</title>
        <authorList>
            <person name="Welch R.A."/>
            <person name="Burland V."/>
            <person name="Plunkett G. III"/>
            <person name="Redford P."/>
            <person name="Roesch P."/>
            <person name="Rasko D."/>
            <person name="Buckles E.L."/>
            <person name="Liou S.-R."/>
            <person name="Boutin A."/>
            <person name="Hackett J."/>
            <person name="Stroud D."/>
            <person name="Mayhew G.F."/>
            <person name="Rose D.J."/>
            <person name="Zhou S."/>
            <person name="Schwartz D.C."/>
            <person name="Perna N.T."/>
            <person name="Mobley H.L.T."/>
            <person name="Donnenberg M.S."/>
            <person name="Blattner F.R."/>
        </authorList>
    </citation>
    <scope>NUCLEOTIDE SEQUENCE [LARGE SCALE GENOMIC DNA]</scope>
    <source>
        <strain>CFT073 / ATCC 700928 / UPEC</strain>
    </source>
</reference>
<gene>
    <name type="primary">ygiC</name>
    <name type="ordered locus">c3784</name>
</gene>
<dbReference type="EC" id="6.3.1.-"/>
<dbReference type="EMBL" id="AE014075">
    <property type="protein sequence ID" value="AAN82228.1"/>
    <property type="molecule type" value="Genomic_DNA"/>
</dbReference>
<dbReference type="RefSeq" id="WP_000442860.1">
    <property type="nucleotide sequence ID" value="NZ_CP051263.1"/>
</dbReference>
<dbReference type="SMR" id="P0ADT6"/>
<dbReference type="STRING" id="199310.c3784"/>
<dbReference type="KEGG" id="ecc:c3784"/>
<dbReference type="eggNOG" id="COG0754">
    <property type="taxonomic scope" value="Bacteria"/>
</dbReference>
<dbReference type="HOGENOM" id="CLU_059175_0_0_6"/>
<dbReference type="BioCyc" id="ECOL199310:C3784-MONOMER"/>
<dbReference type="Proteomes" id="UP000001410">
    <property type="component" value="Chromosome"/>
</dbReference>
<dbReference type="GO" id="GO:0005524">
    <property type="term" value="F:ATP binding"/>
    <property type="evidence" value="ECO:0007669"/>
    <property type="project" value="UniProtKB-KW"/>
</dbReference>
<dbReference type="GO" id="GO:0016874">
    <property type="term" value="F:ligase activity"/>
    <property type="evidence" value="ECO:0007669"/>
    <property type="project" value="UniProtKB-KW"/>
</dbReference>
<dbReference type="GO" id="GO:0046872">
    <property type="term" value="F:metal ion binding"/>
    <property type="evidence" value="ECO:0007669"/>
    <property type="project" value="UniProtKB-KW"/>
</dbReference>
<dbReference type="Gene3D" id="3.30.1490.330">
    <property type="match status" value="1"/>
</dbReference>
<dbReference type="InterPro" id="IPR005494">
    <property type="entry name" value="GSPS_pre-ATP-grasp-like_dom"/>
</dbReference>
<dbReference type="InterPro" id="IPR016185">
    <property type="entry name" value="PreATP-grasp_dom_sf"/>
</dbReference>
<dbReference type="Pfam" id="PF03738">
    <property type="entry name" value="GSP_synth"/>
    <property type="match status" value="1"/>
</dbReference>
<dbReference type="SUPFAM" id="SSF56059">
    <property type="entry name" value="Glutathione synthetase ATP-binding domain-like"/>
    <property type="match status" value="1"/>
</dbReference>
<dbReference type="SUPFAM" id="SSF52440">
    <property type="entry name" value="PreATP-grasp domain"/>
    <property type="match status" value="1"/>
</dbReference>
<feature type="chain" id="PRO_0000169403" description="Putative acid--amine ligase YgiC">
    <location>
        <begin position="1"/>
        <end position="386"/>
    </location>
</feature>
<feature type="binding site" evidence="1">
    <location>
        <begin position="100"/>
        <end position="102"/>
    </location>
    <ligand>
        <name>ATP</name>
        <dbReference type="ChEBI" id="CHEBI:30616"/>
    </ligand>
</feature>
<feature type="binding site" evidence="1">
    <location>
        <position position="102"/>
    </location>
    <ligand>
        <name>Mg(2+)</name>
        <dbReference type="ChEBI" id="CHEBI:18420"/>
        <label>1</label>
    </ligand>
</feature>
<feature type="binding site" evidence="1">
    <location>
        <position position="115"/>
    </location>
    <ligand>
        <name>Mg(2+)</name>
        <dbReference type="ChEBI" id="CHEBI:18420"/>
        <label>1</label>
    </ligand>
</feature>
<feature type="binding site" evidence="1">
    <location>
        <position position="115"/>
    </location>
    <ligand>
        <name>Mg(2+)</name>
        <dbReference type="ChEBI" id="CHEBI:18420"/>
        <label>2</label>
    </ligand>
</feature>
<feature type="binding site" evidence="1">
    <location>
        <position position="117"/>
    </location>
    <ligand>
        <name>Mg(2+)</name>
        <dbReference type="ChEBI" id="CHEBI:18420"/>
        <label>2</label>
    </ligand>
</feature>
<feature type="binding site" evidence="1">
    <location>
        <position position="267"/>
    </location>
    <ligand>
        <name>ATP</name>
        <dbReference type="ChEBI" id="CHEBI:30616"/>
    </ligand>
</feature>
<feature type="binding site" evidence="1">
    <location>
        <position position="302"/>
    </location>
    <ligand>
        <name>ATP</name>
        <dbReference type="ChEBI" id="CHEBI:30616"/>
    </ligand>
</feature>
<feature type="binding site" evidence="1">
    <location>
        <position position="309"/>
    </location>
    <ligand>
        <name>ATP</name>
        <dbReference type="ChEBI" id="CHEBI:30616"/>
    </ligand>
</feature>
<feature type="binding site" evidence="1">
    <location>
        <position position="336"/>
    </location>
    <ligand>
        <name>ATP</name>
        <dbReference type="ChEBI" id="CHEBI:30616"/>
    </ligand>
</feature>
<feature type="binding site" evidence="1">
    <location>
        <begin position="371"/>
        <end position="373"/>
    </location>
    <ligand>
        <name>ATP</name>
        <dbReference type="ChEBI" id="CHEBI:30616"/>
    </ligand>
</feature>
<feature type="site" description="Transition state stabilizer" evidence="1">
    <location>
        <position position="100"/>
    </location>
</feature>